<dbReference type="EMBL" id="JWIN01034738">
    <property type="status" value="NOT_ANNOTATED_CDS"/>
    <property type="molecule type" value="Genomic_DNA"/>
</dbReference>
<dbReference type="RefSeq" id="XP_010985913.1">
    <property type="nucleotide sequence ID" value="XM_010987611.3"/>
</dbReference>
<dbReference type="SMR" id="P0DOC1"/>
<dbReference type="STRING" id="9838.ENSCDRP00005008923"/>
<dbReference type="GeneID" id="105095466"/>
<dbReference type="KEGG" id="cdk:105095466"/>
<dbReference type="CTD" id="344"/>
<dbReference type="OrthoDB" id="9881800at2759"/>
<dbReference type="GO" id="GO:0042627">
    <property type="term" value="C:chylomicron"/>
    <property type="evidence" value="ECO:0007669"/>
    <property type="project" value="UniProtKB-KW"/>
</dbReference>
<dbReference type="GO" id="GO:0034364">
    <property type="term" value="C:high-density lipoprotein particle"/>
    <property type="evidence" value="ECO:0007669"/>
    <property type="project" value="UniProtKB-KW"/>
</dbReference>
<dbReference type="GO" id="GO:0034362">
    <property type="term" value="C:low-density lipoprotein particle"/>
    <property type="evidence" value="ECO:0007669"/>
    <property type="project" value="UniProtKB-KW"/>
</dbReference>
<dbReference type="GO" id="GO:0034361">
    <property type="term" value="C:very-low-density lipoprotein particle"/>
    <property type="evidence" value="ECO:0007669"/>
    <property type="project" value="UniProtKB-KW"/>
</dbReference>
<dbReference type="GO" id="GO:0016004">
    <property type="term" value="F:phospholipase activator activity"/>
    <property type="evidence" value="ECO:0007669"/>
    <property type="project" value="TreeGrafter"/>
</dbReference>
<dbReference type="GO" id="GO:0043274">
    <property type="term" value="F:phospholipase binding"/>
    <property type="evidence" value="ECO:0007669"/>
    <property type="project" value="TreeGrafter"/>
</dbReference>
<dbReference type="GO" id="GO:0016042">
    <property type="term" value="P:lipid catabolic process"/>
    <property type="evidence" value="ECO:0007669"/>
    <property type="project" value="UniProtKB-KW"/>
</dbReference>
<dbReference type="GO" id="GO:0006869">
    <property type="term" value="P:lipid transport"/>
    <property type="evidence" value="ECO:0007669"/>
    <property type="project" value="UniProtKB-KW"/>
</dbReference>
<dbReference type="GO" id="GO:0060697">
    <property type="term" value="P:positive regulation of phospholipid catabolic process"/>
    <property type="evidence" value="ECO:0007669"/>
    <property type="project" value="TreeGrafter"/>
</dbReference>
<dbReference type="FunFam" id="1.10.1440.10:FF:000001">
    <property type="entry name" value="Apolipoprotein C-II"/>
    <property type="match status" value="1"/>
</dbReference>
<dbReference type="Gene3D" id="1.10.1440.10">
    <property type="entry name" value="Apolipoprotein C-II"/>
    <property type="match status" value="1"/>
</dbReference>
<dbReference type="InterPro" id="IPR008019">
    <property type="entry name" value="Apo-CII"/>
</dbReference>
<dbReference type="InterPro" id="IPR023121">
    <property type="entry name" value="ApoC-II_dom_sf"/>
</dbReference>
<dbReference type="PANTHER" id="PTHR16566">
    <property type="entry name" value="APOLIPOPROTEIN C-II"/>
    <property type="match status" value="1"/>
</dbReference>
<dbReference type="PANTHER" id="PTHR16566:SF0">
    <property type="entry name" value="APOLIPOPROTEIN C-II"/>
    <property type="match status" value="1"/>
</dbReference>
<dbReference type="Pfam" id="PF05355">
    <property type="entry name" value="Apo-CII"/>
    <property type="match status" value="1"/>
</dbReference>
<evidence type="ECO:0000250" key="1">
    <source>
        <dbReference type="UniProtKB" id="P02655"/>
    </source>
</evidence>
<evidence type="ECO:0000255" key="2"/>
<evidence type="ECO:0000305" key="3"/>
<comment type="function">
    <text evidence="1">Component of chylomicrons, very low-density lipoproteins (VLDL), low-density lipoproteins (LDL), and high-density lipoproteins (HDL) in plasma. Plays an important role in lipoprotein metabolism as an activator of lipoprotein lipase. Both proapolipoprotein C-II and apolipoprotein C-II can activate lipoprotein lipase.</text>
</comment>
<comment type="subcellular location">
    <subcellularLocation>
        <location evidence="1">Secreted</location>
    </subcellularLocation>
</comment>
<comment type="PTM">
    <text evidence="1">Proapolipoprotein C-II is synthesized as a sialic acid containing glycoprotein which is subsequently desialylated prior to its proteolytic processing.</text>
</comment>
<comment type="PTM">
    <text evidence="1">Proapolipoprotein C-II undergoes proteolytic cleavage of its N-terminal hexapeptide to generate apolipoprotein C-II. In bovine, proapolipoprotein C-II was found to be the minor form whereas apolipoprotein C-II was found to be the major form in plasma.</text>
</comment>
<comment type="similarity">
    <text evidence="3">Belongs to the apolipoprotein C2 family.</text>
</comment>
<keyword id="KW-0162">Chylomicron</keyword>
<keyword id="KW-0325">Glycoprotein</keyword>
<keyword id="KW-0345">HDL</keyword>
<keyword id="KW-0427">LDL</keyword>
<keyword id="KW-0442">Lipid degradation</keyword>
<keyword id="KW-0443">Lipid metabolism</keyword>
<keyword id="KW-0445">Lipid transport</keyword>
<keyword id="KW-0964">Secreted</keyword>
<keyword id="KW-0730">Sialic acid</keyword>
<keyword id="KW-0732">Signal</keyword>
<keyword id="KW-0813">Transport</keyword>
<keyword id="KW-0850">VLDL</keyword>
<organism>
    <name type="scientific">Camelus dromedarius</name>
    <name type="common">Dromedary</name>
    <name type="synonym">Arabian camel</name>
    <dbReference type="NCBI Taxonomy" id="9838"/>
    <lineage>
        <taxon>Eukaryota</taxon>
        <taxon>Metazoa</taxon>
        <taxon>Chordata</taxon>
        <taxon>Craniata</taxon>
        <taxon>Vertebrata</taxon>
        <taxon>Euteleostomi</taxon>
        <taxon>Mammalia</taxon>
        <taxon>Eutheria</taxon>
        <taxon>Laurasiatheria</taxon>
        <taxon>Artiodactyla</taxon>
        <taxon>Tylopoda</taxon>
        <taxon>Camelidae</taxon>
        <taxon>Camelus</taxon>
    </lineage>
</organism>
<name>APOC2_CAMDR</name>
<proteinExistence type="inferred from homology"/>
<feature type="signal peptide" evidence="2">
    <location>
        <begin position="1"/>
        <end position="26"/>
    </location>
</feature>
<feature type="chain" id="PRO_0000437467" description="Proapolipoprotein C-II">
    <location>
        <begin position="27"/>
        <end position="101"/>
    </location>
</feature>
<feature type="chain" id="PRO_0000437468" description="Apolipoprotein C-II" evidence="1">
    <location>
        <begin position="29"/>
        <end position="101"/>
    </location>
</feature>
<feature type="region of interest" description="Lipid binding" evidence="1">
    <location>
        <begin position="66"/>
        <end position="74"/>
    </location>
</feature>
<feature type="region of interest" description="Lipoprotein lipase cofactor" evidence="1">
    <location>
        <begin position="78"/>
        <end position="101"/>
    </location>
</feature>
<accession>P0DOC1</accession>
<sequence>MGTRYFLALFLILLVLGFKVQGVAMAQEDEADSPGLLTRMQESLFSYWDTAKAAAQDLYQKTYLPTMDEKIRDIYNKSTAAVTTYAGIFTDQLLSLLKGDQ</sequence>
<gene>
    <name type="primary">APOC2</name>
</gene>
<protein>
    <recommendedName>
        <fullName>Apolipoprotein C-II</fullName>
        <shortName>Apo-CII</shortName>
        <shortName>ApoC-II</shortName>
    </recommendedName>
    <alternativeName>
        <fullName>Apolipoprotein C2</fullName>
    </alternativeName>
    <component>
        <recommendedName>
            <fullName>Proapolipoprotein C-II</fullName>
            <shortName>ProapoC-II</shortName>
        </recommendedName>
    </component>
</protein>
<reference key="1">
    <citation type="submission" date="2014-12" db="EMBL/GenBank/DDBJ databases">
        <title>The de novo genome assembly and annotation of a female domestic dromedary of North African origin.</title>
        <authorList>
            <person name="Fitak R."/>
            <person name="Mohandesan E."/>
            <person name="Burger P.A."/>
            <person name="Jukka C."/>
        </authorList>
    </citation>
    <scope>NUCLEOTIDE SEQUENCE [LARGE SCALE GENOMIC DNA]</scope>
</reference>
<reference key="2">
    <citation type="unpublished observations" date="2016-07">
        <authorList>
            <person name="Puppione D.L."/>
        </authorList>
    </citation>
    <scope>IDENTIFICATION</scope>
</reference>